<gene>
    <name evidence="1" type="primary">trpF</name>
    <name type="ordered locus">TM1040_0204</name>
</gene>
<evidence type="ECO:0000255" key="1">
    <source>
        <dbReference type="HAMAP-Rule" id="MF_00135"/>
    </source>
</evidence>
<protein>
    <recommendedName>
        <fullName evidence="1">N-(5'-phosphoribosyl)anthranilate isomerase</fullName>
        <shortName evidence="1">PRAI</shortName>
        <ecNumber evidence="1">5.3.1.24</ecNumber>
    </recommendedName>
</protein>
<sequence>MADIRVKICGMKTRADMEAAAAAGAAYVGLNFYAKSARSVTIAQAAALASDAPVGLAKVGLVVNPTDADLDAITGSVPLDMIQLHGQESVERVAEIKTRYGLPVMKVIGVAEAADLDPIDLYAQVADQLMVDAKAPKGAKLPGGNGISFDWQLLASKKYWQAPWMLAGGLTPENVAEAIRKTGARQVDVASGVESAPAQKDPDLMRAFVEAAQAV</sequence>
<feature type="chain" id="PRO_1000018639" description="N-(5'-phosphoribosyl)anthranilate isomerase">
    <location>
        <begin position="1"/>
        <end position="215"/>
    </location>
</feature>
<organism>
    <name type="scientific">Ruegeria sp. (strain TM1040)</name>
    <name type="common">Silicibacter sp.</name>
    <dbReference type="NCBI Taxonomy" id="292414"/>
    <lineage>
        <taxon>Bacteria</taxon>
        <taxon>Pseudomonadati</taxon>
        <taxon>Pseudomonadota</taxon>
        <taxon>Alphaproteobacteria</taxon>
        <taxon>Rhodobacterales</taxon>
        <taxon>Roseobacteraceae</taxon>
        <taxon>Ruegeria</taxon>
    </lineage>
</organism>
<comment type="catalytic activity">
    <reaction evidence="1">
        <text>N-(5-phospho-beta-D-ribosyl)anthranilate = 1-(2-carboxyphenylamino)-1-deoxy-D-ribulose 5-phosphate</text>
        <dbReference type="Rhea" id="RHEA:21540"/>
        <dbReference type="ChEBI" id="CHEBI:18277"/>
        <dbReference type="ChEBI" id="CHEBI:58613"/>
        <dbReference type="EC" id="5.3.1.24"/>
    </reaction>
</comment>
<comment type="pathway">
    <text evidence="1">Amino-acid biosynthesis; L-tryptophan biosynthesis; L-tryptophan from chorismate: step 3/5.</text>
</comment>
<comment type="similarity">
    <text evidence="1">Belongs to the TrpF family.</text>
</comment>
<reference key="1">
    <citation type="submission" date="2006-05" db="EMBL/GenBank/DDBJ databases">
        <title>Complete sequence of chromosome of Silicibacter sp. TM1040.</title>
        <authorList>
            <consortium name="US DOE Joint Genome Institute"/>
            <person name="Copeland A."/>
            <person name="Lucas S."/>
            <person name="Lapidus A."/>
            <person name="Barry K."/>
            <person name="Detter J.C."/>
            <person name="Glavina del Rio T."/>
            <person name="Hammon N."/>
            <person name="Israni S."/>
            <person name="Dalin E."/>
            <person name="Tice H."/>
            <person name="Pitluck S."/>
            <person name="Brettin T."/>
            <person name="Bruce D."/>
            <person name="Han C."/>
            <person name="Tapia R."/>
            <person name="Goodwin L."/>
            <person name="Thompson L.S."/>
            <person name="Gilna P."/>
            <person name="Schmutz J."/>
            <person name="Larimer F."/>
            <person name="Land M."/>
            <person name="Hauser L."/>
            <person name="Kyrpides N."/>
            <person name="Kim E."/>
            <person name="Belas R."/>
            <person name="Moran M.A."/>
            <person name="Buchan A."/>
            <person name="Gonzalez J.M."/>
            <person name="Schell M.A."/>
            <person name="Sun F."/>
            <person name="Richardson P."/>
        </authorList>
    </citation>
    <scope>NUCLEOTIDE SEQUENCE [LARGE SCALE GENOMIC DNA]</scope>
    <source>
        <strain>TM1040</strain>
    </source>
</reference>
<name>TRPF_RUEST</name>
<proteinExistence type="inferred from homology"/>
<accession>Q1GK79</accession>
<dbReference type="EC" id="5.3.1.24" evidence="1"/>
<dbReference type="EMBL" id="CP000377">
    <property type="protein sequence ID" value="ABF62937.1"/>
    <property type="molecule type" value="Genomic_DNA"/>
</dbReference>
<dbReference type="RefSeq" id="WP_011537571.1">
    <property type="nucleotide sequence ID" value="NC_008044.1"/>
</dbReference>
<dbReference type="SMR" id="Q1GK79"/>
<dbReference type="STRING" id="292414.TM1040_0204"/>
<dbReference type="KEGG" id="sit:TM1040_0204"/>
<dbReference type="eggNOG" id="COG0135">
    <property type="taxonomic scope" value="Bacteria"/>
</dbReference>
<dbReference type="HOGENOM" id="CLU_076364_1_1_5"/>
<dbReference type="OrthoDB" id="9796196at2"/>
<dbReference type="UniPathway" id="UPA00035">
    <property type="reaction ID" value="UER00042"/>
</dbReference>
<dbReference type="Proteomes" id="UP000000636">
    <property type="component" value="Chromosome"/>
</dbReference>
<dbReference type="GO" id="GO:0004640">
    <property type="term" value="F:phosphoribosylanthranilate isomerase activity"/>
    <property type="evidence" value="ECO:0007669"/>
    <property type="project" value="UniProtKB-UniRule"/>
</dbReference>
<dbReference type="GO" id="GO:0000162">
    <property type="term" value="P:L-tryptophan biosynthetic process"/>
    <property type="evidence" value="ECO:0007669"/>
    <property type="project" value="UniProtKB-UniRule"/>
</dbReference>
<dbReference type="CDD" id="cd00405">
    <property type="entry name" value="PRAI"/>
    <property type="match status" value="1"/>
</dbReference>
<dbReference type="Gene3D" id="3.20.20.70">
    <property type="entry name" value="Aldolase class I"/>
    <property type="match status" value="1"/>
</dbReference>
<dbReference type="HAMAP" id="MF_00135">
    <property type="entry name" value="PRAI"/>
    <property type="match status" value="1"/>
</dbReference>
<dbReference type="InterPro" id="IPR013785">
    <property type="entry name" value="Aldolase_TIM"/>
</dbReference>
<dbReference type="InterPro" id="IPR001240">
    <property type="entry name" value="PRAI_dom"/>
</dbReference>
<dbReference type="InterPro" id="IPR011060">
    <property type="entry name" value="RibuloseP-bd_barrel"/>
</dbReference>
<dbReference type="InterPro" id="IPR044643">
    <property type="entry name" value="TrpF_fam"/>
</dbReference>
<dbReference type="NCBIfam" id="NF002295">
    <property type="entry name" value="PRK01222.1-1"/>
    <property type="match status" value="1"/>
</dbReference>
<dbReference type="PANTHER" id="PTHR42894">
    <property type="entry name" value="N-(5'-PHOSPHORIBOSYL)ANTHRANILATE ISOMERASE"/>
    <property type="match status" value="1"/>
</dbReference>
<dbReference type="PANTHER" id="PTHR42894:SF1">
    <property type="entry name" value="N-(5'-PHOSPHORIBOSYL)ANTHRANILATE ISOMERASE"/>
    <property type="match status" value="1"/>
</dbReference>
<dbReference type="Pfam" id="PF00697">
    <property type="entry name" value="PRAI"/>
    <property type="match status" value="1"/>
</dbReference>
<dbReference type="SUPFAM" id="SSF51366">
    <property type="entry name" value="Ribulose-phoshate binding barrel"/>
    <property type="match status" value="1"/>
</dbReference>
<keyword id="KW-0028">Amino-acid biosynthesis</keyword>
<keyword id="KW-0057">Aromatic amino acid biosynthesis</keyword>
<keyword id="KW-0413">Isomerase</keyword>
<keyword id="KW-1185">Reference proteome</keyword>
<keyword id="KW-0822">Tryptophan biosynthesis</keyword>